<reference key="1">
    <citation type="journal article" date="2006" name="Proc. Natl. Acad. Sci. U.S.A.">
        <title>Molecular genetic anatomy of inter- and intraserotype variation in the human bacterial pathogen group A Streptococcus.</title>
        <authorList>
            <person name="Beres S.B."/>
            <person name="Richter E.W."/>
            <person name="Nagiec M.J."/>
            <person name="Sumby P."/>
            <person name="Porcella S.F."/>
            <person name="DeLeo F.R."/>
            <person name="Musser J.M."/>
        </authorList>
    </citation>
    <scope>NUCLEOTIDE SEQUENCE [LARGE SCALE GENOMIC DNA]</scope>
    <source>
        <strain>MGAS9429</strain>
    </source>
</reference>
<comment type="catalytic activity">
    <reaction evidence="1">
        <text>tRNA(Leu) + L-leucine + ATP = L-leucyl-tRNA(Leu) + AMP + diphosphate</text>
        <dbReference type="Rhea" id="RHEA:11688"/>
        <dbReference type="Rhea" id="RHEA-COMP:9613"/>
        <dbReference type="Rhea" id="RHEA-COMP:9622"/>
        <dbReference type="ChEBI" id="CHEBI:30616"/>
        <dbReference type="ChEBI" id="CHEBI:33019"/>
        <dbReference type="ChEBI" id="CHEBI:57427"/>
        <dbReference type="ChEBI" id="CHEBI:78442"/>
        <dbReference type="ChEBI" id="CHEBI:78494"/>
        <dbReference type="ChEBI" id="CHEBI:456215"/>
        <dbReference type="EC" id="6.1.1.4"/>
    </reaction>
</comment>
<comment type="subcellular location">
    <subcellularLocation>
        <location evidence="1">Cytoplasm</location>
    </subcellularLocation>
</comment>
<comment type="similarity">
    <text evidence="1">Belongs to the class-I aminoacyl-tRNA synthetase family.</text>
</comment>
<evidence type="ECO:0000255" key="1">
    <source>
        <dbReference type="HAMAP-Rule" id="MF_00049"/>
    </source>
</evidence>
<organism>
    <name type="scientific">Streptococcus pyogenes serotype M12 (strain MGAS9429)</name>
    <dbReference type="NCBI Taxonomy" id="370551"/>
    <lineage>
        <taxon>Bacteria</taxon>
        <taxon>Bacillati</taxon>
        <taxon>Bacillota</taxon>
        <taxon>Bacilli</taxon>
        <taxon>Lactobacillales</taxon>
        <taxon>Streptococcaceae</taxon>
        <taxon>Streptococcus</taxon>
    </lineage>
</organism>
<name>SYL_STRPC</name>
<sequence length="833" mass="93865">MTFYDHTAIEPKWQAFWADNHTFKTGTDASKPKFYALDMFPYPSGAGLHVGHPEGYTATDILSRFKRAQGHNVLHPMGWDAFGLPAEQYAMDTGNDPAEFTAENIANFKRQINALGFSYDWDREVNTTDPNYYKWTQWIFTKLYEKGLAYEAEVPVNWVEELGTAIANEEVLPDGTSERGGYPVVRKPMRQWMLKITAYAERLLEDLEEVDWPESIKDMQRNWIGKSTGANVTFKVKDTDKDFTVFTTRPDTLFGATYAVLAPEHALVDAITTSDQAEAVADYKRQASLKSDLARTDLAKEKTGVWTGSYAINPVNGKEMPVWIADYVLASYGTGAIMAVPAHDERDWEFAKQFNLDIIPVLEGGNVEEAAFTEDGLHINSDFLDGLDKASAIAKMVEWLEAEGVGNENVTYRLRDWLFSRQRYWGEPIPIIHWEDGTSTAVPESELPLVLPVTKDIRPSGTGESPLANVTDWLEVTREDGVKGRRETNTMPQWAGSSWYYLRYIDPHNTEKLADEELLKQWLPVDIYVGGAEHAVLHLLYARFWHKVLYDLGVVPTKEPFQKLFNQGMILGTSYRDSRGALVATDKVEKRDGSFFHVETGEELEQAPAKMSKSLKNVVNPDDVVEQYGADTLRVYEMFMGPLDASIAWSEEGLEGSRKFLDRVYRLITTKEITEENSGALDKVYNETVKAVTEQVDQMKFNTAIAQLMVFVNAANKEDKLFSDYAKGFVQLIAPFAPHLGEELWQALTASGESISYVPWPSYDESKLVENDVEIVVQIKGKVKAKLVVAKDLSREELQEVALANEKVQAEIAGKDIIKVIAVPNKLVNIVIK</sequence>
<protein>
    <recommendedName>
        <fullName evidence="1">Leucine--tRNA ligase</fullName>
        <ecNumber evidence="1">6.1.1.4</ecNumber>
    </recommendedName>
    <alternativeName>
        <fullName evidence="1">Leucyl-tRNA synthetase</fullName>
        <shortName evidence="1">LeuRS</shortName>
    </alternativeName>
</protein>
<gene>
    <name evidence="1" type="primary">leuS</name>
    <name type="ordered locus">MGAS9429_Spy0149</name>
</gene>
<dbReference type="EC" id="6.1.1.4" evidence="1"/>
<dbReference type="EMBL" id="CP000259">
    <property type="protein sequence ID" value="ABF31337.1"/>
    <property type="molecule type" value="Genomic_DNA"/>
</dbReference>
<dbReference type="RefSeq" id="WP_002987902.1">
    <property type="nucleotide sequence ID" value="NC_008021.1"/>
</dbReference>
<dbReference type="SMR" id="Q1JNR2"/>
<dbReference type="KEGG" id="spk:MGAS9429_Spy0149"/>
<dbReference type="HOGENOM" id="CLU_004427_0_0_9"/>
<dbReference type="Proteomes" id="UP000002433">
    <property type="component" value="Chromosome"/>
</dbReference>
<dbReference type="GO" id="GO:0005829">
    <property type="term" value="C:cytosol"/>
    <property type="evidence" value="ECO:0007669"/>
    <property type="project" value="TreeGrafter"/>
</dbReference>
<dbReference type="GO" id="GO:0002161">
    <property type="term" value="F:aminoacyl-tRNA deacylase activity"/>
    <property type="evidence" value="ECO:0007669"/>
    <property type="project" value="InterPro"/>
</dbReference>
<dbReference type="GO" id="GO:0005524">
    <property type="term" value="F:ATP binding"/>
    <property type="evidence" value="ECO:0007669"/>
    <property type="project" value="UniProtKB-UniRule"/>
</dbReference>
<dbReference type="GO" id="GO:0004823">
    <property type="term" value="F:leucine-tRNA ligase activity"/>
    <property type="evidence" value="ECO:0007669"/>
    <property type="project" value="UniProtKB-UniRule"/>
</dbReference>
<dbReference type="GO" id="GO:0006429">
    <property type="term" value="P:leucyl-tRNA aminoacylation"/>
    <property type="evidence" value="ECO:0007669"/>
    <property type="project" value="UniProtKB-UniRule"/>
</dbReference>
<dbReference type="CDD" id="cd07958">
    <property type="entry name" value="Anticodon_Ia_Leu_BEm"/>
    <property type="match status" value="1"/>
</dbReference>
<dbReference type="CDD" id="cd00812">
    <property type="entry name" value="LeuRS_core"/>
    <property type="match status" value="1"/>
</dbReference>
<dbReference type="FunFam" id="1.10.730.10:FF:000012">
    <property type="entry name" value="Leucine--tRNA ligase"/>
    <property type="match status" value="1"/>
</dbReference>
<dbReference type="FunFam" id="3.40.50.620:FF:000056">
    <property type="entry name" value="Leucine--tRNA ligase"/>
    <property type="match status" value="1"/>
</dbReference>
<dbReference type="FunFam" id="3.40.50.620:FF:000077">
    <property type="entry name" value="Leucine--tRNA ligase"/>
    <property type="match status" value="1"/>
</dbReference>
<dbReference type="FunFam" id="1.10.730.10:FF:000011">
    <property type="entry name" value="Leucine--tRNA ligase chloroplastic/mitochondrial"/>
    <property type="match status" value="1"/>
</dbReference>
<dbReference type="Gene3D" id="3.40.50.620">
    <property type="entry name" value="HUPs"/>
    <property type="match status" value="2"/>
</dbReference>
<dbReference type="Gene3D" id="1.10.730.10">
    <property type="entry name" value="Isoleucyl-tRNA Synthetase, Domain 1"/>
    <property type="match status" value="1"/>
</dbReference>
<dbReference type="Gene3D" id="3.90.740.10">
    <property type="entry name" value="Valyl/Leucyl/Isoleucyl-tRNA synthetase, editing domain"/>
    <property type="match status" value="1"/>
</dbReference>
<dbReference type="HAMAP" id="MF_00049_B">
    <property type="entry name" value="Leu_tRNA_synth_B"/>
    <property type="match status" value="1"/>
</dbReference>
<dbReference type="InterPro" id="IPR001412">
    <property type="entry name" value="aa-tRNA-synth_I_CS"/>
</dbReference>
<dbReference type="InterPro" id="IPR002300">
    <property type="entry name" value="aa-tRNA-synth_Ia"/>
</dbReference>
<dbReference type="InterPro" id="IPR002302">
    <property type="entry name" value="Leu-tRNA-ligase"/>
</dbReference>
<dbReference type="InterPro" id="IPR025709">
    <property type="entry name" value="Leu_tRNA-synth_edit"/>
</dbReference>
<dbReference type="InterPro" id="IPR013155">
    <property type="entry name" value="M/V/L/I-tRNA-synth_anticd-bd"/>
</dbReference>
<dbReference type="InterPro" id="IPR015413">
    <property type="entry name" value="Methionyl/Leucyl_tRNA_Synth"/>
</dbReference>
<dbReference type="InterPro" id="IPR014729">
    <property type="entry name" value="Rossmann-like_a/b/a_fold"/>
</dbReference>
<dbReference type="InterPro" id="IPR009080">
    <property type="entry name" value="tRNAsynth_Ia_anticodon-bd"/>
</dbReference>
<dbReference type="InterPro" id="IPR009008">
    <property type="entry name" value="Val/Leu/Ile-tRNA-synth_edit"/>
</dbReference>
<dbReference type="NCBIfam" id="TIGR00396">
    <property type="entry name" value="leuS_bact"/>
    <property type="match status" value="1"/>
</dbReference>
<dbReference type="PANTHER" id="PTHR43740:SF2">
    <property type="entry name" value="LEUCINE--TRNA LIGASE, MITOCHONDRIAL"/>
    <property type="match status" value="1"/>
</dbReference>
<dbReference type="PANTHER" id="PTHR43740">
    <property type="entry name" value="LEUCYL-TRNA SYNTHETASE"/>
    <property type="match status" value="1"/>
</dbReference>
<dbReference type="Pfam" id="PF08264">
    <property type="entry name" value="Anticodon_1"/>
    <property type="match status" value="1"/>
</dbReference>
<dbReference type="Pfam" id="PF00133">
    <property type="entry name" value="tRNA-synt_1"/>
    <property type="match status" value="2"/>
</dbReference>
<dbReference type="Pfam" id="PF13603">
    <property type="entry name" value="tRNA-synt_1_2"/>
    <property type="match status" value="1"/>
</dbReference>
<dbReference type="Pfam" id="PF09334">
    <property type="entry name" value="tRNA-synt_1g"/>
    <property type="match status" value="1"/>
</dbReference>
<dbReference type="PRINTS" id="PR00985">
    <property type="entry name" value="TRNASYNTHLEU"/>
</dbReference>
<dbReference type="SUPFAM" id="SSF47323">
    <property type="entry name" value="Anticodon-binding domain of a subclass of class I aminoacyl-tRNA synthetases"/>
    <property type="match status" value="1"/>
</dbReference>
<dbReference type="SUPFAM" id="SSF52374">
    <property type="entry name" value="Nucleotidylyl transferase"/>
    <property type="match status" value="1"/>
</dbReference>
<dbReference type="SUPFAM" id="SSF50677">
    <property type="entry name" value="ValRS/IleRS/LeuRS editing domain"/>
    <property type="match status" value="1"/>
</dbReference>
<dbReference type="PROSITE" id="PS00178">
    <property type="entry name" value="AA_TRNA_LIGASE_I"/>
    <property type="match status" value="1"/>
</dbReference>
<keyword id="KW-0030">Aminoacyl-tRNA synthetase</keyword>
<keyword id="KW-0067">ATP-binding</keyword>
<keyword id="KW-0963">Cytoplasm</keyword>
<keyword id="KW-0436">Ligase</keyword>
<keyword id="KW-0547">Nucleotide-binding</keyword>
<keyword id="KW-0648">Protein biosynthesis</keyword>
<feature type="chain" id="PRO_1000009445" description="Leucine--tRNA ligase">
    <location>
        <begin position="1"/>
        <end position="833"/>
    </location>
</feature>
<feature type="short sequence motif" description="'HIGH' region">
    <location>
        <begin position="41"/>
        <end position="52"/>
    </location>
</feature>
<feature type="short sequence motif" description="'KMSKS' region">
    <location>
        <begin position="610"/>
        <end position="614"/>
    </location>
</feature>
<feature type="binding site" evidence="1">
    <location>
        <position position="613"/>
    </location>
    <ligand>
        <name>ATP</name>
        <dbReference type="ChEBI" id="CHEBI:30616"/>
    </ligand>
</feature>
<accession>Q1JNR2</accession>
<proteinExistence type="inferred from homology"/>